<gene>
    <name type="primary">PPP1R12B</name>
    <name type="synonym">MYPT2</name>
</gene>
<protein>
    <recommendedName>
        <fullName>Protein phosphatase 1 regulatory subunit 12B</fullName>
    </recommendedName>
    <alternativeName>
        <fullName>Myosin phosphatase-targeting subunit 2</fullName>
        <shortName>Myosin phosphatase target subunit 2</shortName>
    </alternativeName>
</protein>
<proteinExistence type="evidence at protein level"/>
<name>MYPT2_HUMAN</name>
<accession>O60237</accession>
<accession>A0A0A0MS24</accession>
<accession>A8MYF5</accession>
<accession>B7ZMN6</accession>
<accession>Q2TAI8</accession>
<accession>Q5T506</accession>
<accession>Q5VUK2</accession>
<accession>Q8N179</accession>
<accession>Q9HCB7</accession>
<accession>Q9HCB8</accession>
<dbReference type="EMBL" id="AB003062">
    <property type="protein sequence ID" value="BAA28376.1"/>
    <property type="molecule type" value="mRNA"/>
</dbReference>
<dbReference type="EMBL" id="AF324888">
    <property type="protein sequence ID" value="AAK00337.1"/>
    <property type="molecule type" value="mRNA"/>
</dbReference>
<dbReference type="EMBL" id="AF324892">
    <property type="protein sequence ID" value="AAK00336.1"/>
    <property type="molecule type" value="Genomic_DNA"/>
</dbReference>
<dbReference type="EMBL" id="AF324889">
    <property type="protein sequence ID" value="AAK00336.1"/>
    <property type="status" value="JOINED"/>
    <property type="molecule type" value="Genomic_DNA"/>
</dbReference>
<dbReference type="EMBL" id="AF324890">
    <property type="protein sequence ID" value="AAK00336.1"/>
    <property type="status" value="JOINED"/>
    <property type="molecule type" value="Genomic_DNA"/>
</dbReference>
<dbReference type="EMBL" id="AF324891">
    <property type="protein sequence ID" value="AAK00336.1"/>
    <property type="status" value="JOINED"/>
    <property type="molecule type" value="Genomic_DNA"/>
</dbReference>
<dbReference type="EMBL" id="AB050641">
    <property type="protein sequence ID" value="BAB17610.1"/>
    <property type="molecule type" value="mRNA"/>
</dbReference>
<dbReference type="EMBL" id="AB050642">
    <property type="protein sequence ID" value="BAB17611.1"/>
    <property type="molecule type" value="mRNA"/>
</dbReference>
<dbReference type="EMBL" id="AC099336">
    <property type="status" value="NOT_ANNOTATED_CDS"/>
    <property type="molecule type" value="Genomic_DNA"/>
</dbReference>
<dbReference type="EMBL" id="AL356953">
    <property type="status" value="NOT_ANNOTATED_CDS"/>
    <property type="molecule type" value="Genomic_DNA"/>
</dbReference>
<dbReference type="EMBL" id="AL589762">
    <property type="status" value="NOT_ANNOTATED_CDS"/>
    <property type="molecule type" value="Genomic_DNA"/>
</dbReference>
<dbReference type="EMBL" id="AC118556">
    <property type="status" value="NOT_ANNOTATED_CDS"/>
    <property type="molecule type" value="Genomic_DNA"/>
</dbReference>
<dbReference type="EMBL" id="CH471067">
    <property type="protein sequence ID" value="EAW91418.1"/>
    <property type="molecule type" value="Genomic_DNA"/>
</dbReference>
<dbReference type="EMBL" id="BC034430">
    <property type="protein sequence ID" value="AAH34430.1"/>
    <property type="molecule type" value="mRNA"/>
</dbReference>
<dbReference type="EMBL" id="BC110907">
    <property type="protein sequence ID" value="AAI10908.1"/>
    <property type="molecule type" value="mRNA"/>
</dbReference>
<dbReference type="EMBL" id="BC144699">
    <property type="protein sequence ID" value="AAI44700.1"/>
    <property type="molecule type" value="mRNA"/>
</dbReference>
<dbReference type="CCDS" id="CCDS1426.1">
    <molecule id="O60237-1"/>
</dbReference>
<dbReference type="CCDS" id="CCDS44294.1">
    <molecule id="O60237-4"/>
</dbReference>
<dbReference type="CCDS" id="CCDS44295.1">
    <molecule id="O60237-3"/>
</dbReference>
<dbReference type="CCDS" id="CCDS53458.1">
    <molecule id="O60237-5"/>
</dbReference>
<dbReference type="CCDS" id="CCDS53459.1">
    <molecule id="O60237-2"/>
</dbReference>
<dbReference type="CCDS" id="CCDS81416.1">
    <molecule id="O60237-6"/>
</dbReference>
<dbReference type="RefSeq" id="NP_001161329.1">
    <molecule id="O60237-5"/>
    <property type="nucleotide sequence ID" value="NM_001167857.2"/>
</dbReference>
<dbReference type="RefSeq" id="NP_001161330.1">
    <molecule id="O60237-2"/>
    <property type="nucleotide sequence ID" value="NM_001167858.2"/>
</dbReference>
<dbReference type="RefSeq" id="NP_001184060.1">
    <property type="nucleotide sequence ID" value="NM_001197131.1"/>
</dbReference>
<dbReference type="RefSeq" id="NP_001317958.1">
    <molecule id="O60237-6"/>
    <property type="nucleotide sequence ID" value="NM_001331029.2"/>
</dbReference>
<dbReference type="RefSeq" id="NP_002472.2">
    <molecule id="O60237-1"/>
    <property type="nucleotide sequence ID" value="NM_002481.4"/>
</dbReference>
<dbReference type="RefSeq" id="NP_115286.1">
    <molecule id="O60237-4"/>
    <property type="nucleotide sequence ID" value="NM_032103.3"/>
</dbReference>
<dbReference type="RefSeq" id="NP_115287.1">
    <molecule id="O60237-3"/>
    <property type="nucleotide sequence ID" value="NM_032104.3"/>
</dbReference>
<dbReference type="RefSeq" id="XP_016856841.1">
    <molecule id="O60237-3"/>
    <property type="nucleotide sequence ID" value="XM_017001352.2"/>
</dbReference>
<dbReference type="RefSeq" id="XP_016856842.1">
    <property type="nucleotide sequence ID" value="XM_017001353.1"/>
</dbReference>
<dbReference type="RefSeq" id="XP_016856843.1">
    <property type="nucleotide sequence ID" value="XM_017001354.1"/>
</dbReference>
<dbReference type="RefSeq" id="XP_054192716.1">
    <molecule id="O60237-3"/>
    <property type="nucleotide sequence ID" value="XM_054336741.1"/>
</dbReference>
<dbReference type="SMR" id="O60237"/>
<dbReference type="BioGRID" id="110743">
    <property type="interactions" value="69"/>
</dbReference>
<dbReference type="ELM" id="O60237"/>
<dbReference type="FunCoup" id="O60237">
    <property type="interactions" value="1276"/>
</dbReference>
<dbReference type="IntAct" id="O60237">
    <property type="interactions" value="56"/>
</dbReference>
<dbReference type="MINT" id="O60237"/>
<dbReference type="STRING" id="9606.ENSP00000375821"/>
<dbReference type="GlyCosmos" id="O60237">
    <property type="glycosylation" value="1 site, 1 glycan"/>
</dbReference>
<dbReference type="GlyGen" id="O60237">
    <property type="glycosylation" value="1 site, 1 O-linked glycan (1 site)"/>
</dbReference>
<dbReference type="iPTMnet" id="O60237"/>
<dbReference type="PhosphoSitePlus" id="O60237"/>
<dbReference type="BioMuta" id="PPP1R12B"/>
<dbReference type="jPOST" id="O60237"/>
<dbReference type="MassIVE" id="O60237"/>
<dbReference type="PaxDb" id="9606-ENSP00000476755"/>
<dbReference type="PeptideAtlas" id="O60237"/>
<dbReference type="ProteomicsDB" id="49262">
    <molecule id="O60237-1"/>
</dbReference>
<dbReference type="ProteomicsDB" id="49263">
    <molecule id="O60237-2"/>
</dbReference>
<dbReference type="ProteomicsDB" id="49264">
    <molecule id="O60237-3"/>
</dbReference>
<dbReference type="ProteomicsDB" id="49265">
    <molecule id="O60237-4"/>
</dbReference>
<dbReference type="ProteomicsDB" id="49266">
    <molecule id="O60237-5"/>
</dbReference>
<dbReference type="Pumba" id="O60237"/>
<dbReference type="Antibodypedia" id="20653">
    <property type="antibodies" value="60 antibodies from 17 providers"/>
</dbReference>
<dbReference type="DNASU" id="4660"/>
<dbReference type="Ensembl" id="ENST00000290419.9">
    <molecule id="O60237-3"/>
    <property type="protein sequence ID" value="ENSP00000484005.1"/>
    <property type="gene ID" value="ENSG00000077157.23"/>
</dbReference>
<dbReference type="Ensembl" id="ENST00000356764.6">
    <molecule id="O60237-2"/>
    <property type="protein sequence ID" value="ENSP00000349206.2"/>
    <property type="gene ID" value="ENSG00000077157.23"/>
</dbReference>
<dbReference type="Ensembl" id="ENST00000391959.5">
    <molecule id="O60237-6"/>
    <property type="protein sequence ID" value="ENSP00000375821.5"/>
    <property type="gene ID" value="ENSG00000077157.23"/>
</dbReference>
<dbReference type="Ensembl" id="ENST00000480184.5">
    <molecule id="O60237-5"/>
    <property type="protein sequence ID" value="ENSP00000417159.1"/>
    <property type="gene ID" value="ENSG00000077157.23"/>
</dbReference>
<dbReference type="Ensembl" id="ENST00000491336.5">
    <molecule id="O60237-4"/>
    <property type="protein sequence ID" value="ENSP00000480852.1"/>
    <property type="gene ID" value="ENSG00000077157.23"/>
</dbReference>
<dbReference type="Ensembl" id="ENST00000608999.6">
    <molecule id="O60237-1"/>
    <property type="protein sequence ID" value="ENSP00000476755.1"/>
    <property type="gene ID" value="ENSG00000077157.23"/>
</dbReference>
<dbReference type="GeneID" id="4660"/>
<dbReference type="KEGG" id="hsa:4660"/>
<dbReference type="MANE-Select" id="ENST00000608999.6">
    <property type="protein sequence ID" value="ENSP00000476755.1"/>
    <property type="RefSeq nucleotide sequence ID" value="NM_002481.4"/>
    <property type="RefSeq protein sequence ID" value="NP_002472.2"/>
</dbReference>
<dbReference type="UCSC" id="uc001gxy.4">
    <molecule id="O60237-1"/>
    <property type="organism name" value="human"/>
</dbReference>
<dbReference type="AGR" id="HGNC:7619"/>
<dbReference type="CTD" id="4660"/>
<dbReference type="DisGeNET" id="4660"/>
<dbReference type="GeneCards" id="PPP1R12B"/>
<dbReference type="HGNC" id="HGNC:7619">
    <property type="gene designation" value="PPP1R12B"/>
</dbReference>
<dbReference type="HPA" id="ENSG00000077157">
    <property type="expression patterns" value="Tissue enhanced (heart)"/>
</dbReference>
<dbReference type="MIM" id="603768">
    <property type="type" value="gene"/>
</dbReference>
<dbReference type="neXtProt" id="NX_O60237"/>
<dbReference type="OpenTargets" id="ENSG00000077157"/>
<dbReference type="PharmGKB" id="PA33618"/>
<dbReference type="VEuPathDB" id="HostDB:ENSG00000077157"/>
<dbReference type="eggNOG" id="KOG0505">
    <property type="taxonomic scope" value="Eukaryota"/>
</dbReference>
<dbReference type="GeneTree" id="ENSGT00940000157067"/>
<dbReference type="HOGENOM" id="CLU_000134_54_0_1"/>
<dbReference type="InParanoid" id="O60237"/>
<dbReference type="OMA" id="GYSEVLX"/>
<dbReference type="OrthoDB" id="9534551at2759"/>
<dbReference type="PAN-GO" id="O60237">
    <property type="GO annotations" value="5 GO annotations based on evolutionary models"/>
</dbReference>
<dbReference type="PhylomeDB" id="O60237"/>
<dbReference type="TreeFam" id="TF105543"/>
<dbReference type="BRENDA" id="3.1.3.53">
    <property type="organism ID" value="2681"/>
</dbReference>
<dbReference type="PathwayCommons" id="O60237"/>
<dbReference type="Reactome" id="R-HSA-2565942">
    <molecule id="O60237-4"/>
    <property type="pathway name" value="Regulation of PLK1 Activity at G2/M Transition"/>
</dbReference>
<dbReference type="Reactome" id="R-HSA-5625740">
    <property type="pathway name" value="RHO GTPases activate PKNs"/>
</dbReference>
<dbReference type="Reactome" id="R-HSA-5625900">
    <property type="pathway name" value="RHO GTPases activate CIT"/>
</dbReference>
<dbReference type="Reactome" id="R-HSA-5627117">
    <property type="pathway name" value="RHO GTPases Activate ROCKs"/>
</dbReference>
<dbReference type="Reactome" id="R-HSA-5627123">
    <property type="pathway name" value="RHO GTPases activate PAKs"/>
</dbReference>
<dbReference type="SignaLink" id="O60237"/>
<dbReference type="SIGNOR" id="O60237"/>
<dbReference type="BioGRID-ORCS" id="4660">
    <property type="hits" value="13 hits in 1156 CRISPR screens"/>
</dbReference>
<dbReference type="CD-CODE" id="232F8A39">
    <property type="entry name" value="P-body"/>
</dbReference>
<dbReference type="CD-CODE" id="DEE660B4">
    <property type="entry name" value="Stress granule"/>
</dbReference>
<dbReference type="ChiTaRS" id="PPP1R12B">
    <property type="organism name" value="human"/>
</dbReference>
<dbReference type="GeneWiki" id="PPP1R12B"/>
<dbReference type="GenomeRNAi" id="4660"/>
<dbReference type="Pharos" id="O60237">
    <property type="development level" value="Tbio"/>
</dbReference>
<dbReference type="PRO" id="PR:O60237"/>
<dbReference type="Proteomes" id="UP000005640">
    <property type="component" value="Chromosome 1"/>
</dbReference>
<dbReference type="RNAct" id="O60237">
    <property type="molecule type" value="protein"/>
</dbReference>
<dbReference type="Bgee" id="ENSG00000077157">
    <property type="expression patterns" value="Expressed in saphenous vein and 198 other cell types or tissues"/>
</dbReference>
<dbReference type="ExpressionAtlas" id="O60237">
    <property type="expression patterns" value="baseline and differential"/>
</dbReference>
<dbReference type="GO" id="GO:0031672">
    <property type="term" value="C:A band"/>
    <property type="evidence" value="ECO:0000250"/>
    <property type="project" value="UniProtKB"/>
</dbReference>
<dbReference type="GO" id="GO:0005737">
    <property type="term" value="C:cytoplasm"/>
    <property type="evidence" value="ECO:0000318"/>
    <property type="project" value="GO_Central"/>
</dbReference>
<dbReference type="GO" id="GO:0005829">
    <property type="term" value="C:cytosol"/>
    <property type="evidence" value="ECO:0000304"/>
    <property type="project" value="Reactome"/>
</dbReference>
<dbReference type="GO" id="GO:0005654">
    <property type="term" value="C:nucleoplasm"/>
    <property type="evidence" value="ECO:0000304"/>
    <property type="project" value="Reactome"/>
</dbReference>
<dbReference type="GO" id="GO:0001725">
    <property type="term" value="C:stress fiber"/>
    <property type="evidence" value="ECO:0007669"/>
    <property type="project" value="UniProtKB-SubCell"/>
</dbReference>
<dbReference type="GO" id="GO:0030018">
    <property type="term" value="C:Z disc"/>
    <property type="evidence" value="ECO:0000250"/>
    <property type="project" value="UniProtKB"/>
</dbReference>
<dbReference type="GO" id="GO:0008047">
    <property type="term" value="F:enzyme activator activity"/>
    <property type="evidence" value="ECO:0000304"/>
    <property type="project" value="ProtInc"/>
</dbReference>
<dbReference type="GO" id="GO:0004857">
    <property type="term" value="F:enzyme inhibitor activity"/>
    <property type="evidence" value="ECO:0000318"/>
    <property type="project" value="GO_Central"/>
</dbReference>
<dbReference type="GO" id="GO:0017020">
    <property type="term" value="F:myosin phosphatase regulator activity"/>
    <property type="evidence" value="ECO:0000318"/>
    <property type="project" value="GO_Central"/>
</dbReference>
<dbReference type="GO" id="GO:0019901">
    <property type="term" value="F:protein kinase binding"/>
    <property type="evidence" value="ECO:0007669"/>
    <property type="project" value="InterPro"/>
</dbReference>
<dbReference type="GO" id="GO:0048812">
    <property type="term" value="P:neuron projection morphogenesis"/>
    <property type="evidence" value="ECO:0000318"/>
    <property type="project" value="GO_Central"/>
</dbReference>
<dbReference type="GO" id="GO:0006937">
    <property type="term" value="P:regulation of muscle contraction"/>
    <property type="evidence" value="ECO:0000304"/>
    <property type="project" value="ProtInc"/>
</dbReference>
<dbReference type="GO" id="GO:0007165">
    <property type="term" value="P:signal transduction"/>
    <property type="evidence" value="ECO:0000304"/>
    <property type="project" value="ProtInc"/>
</dbReference>
<dbReference type="CDD" id="cd21944">
    <property type="entry name" value="IPD_MYPT1"/>
    <property type="match status" value="1"/>
</dbReference>
<dbReference type="FunFam" id="1.25.40.20:FF:000004">
    <property type="entry name" value="Phosphatase 1 regulatory subunit 12A"/>
    <property type="match status" value="1"/>
</dbReference>
<dbReference type="FunFam" id="1.25.40.20:FF:000007">
    <property type="entry name" value="Phosphatase 1 regulatory subunit 12A"/>
    <property type="match status" value="1"/>
</dbReference>
<dbReference type="Gene3D" id="6.10.140.390">
    <property type="match status" value="1"/>
</dbReference>
<dbReference type="Gene3D" id="6.10.250.1820">
    <property type="match status" value="1"/>
</dbReference>
<dbReference type="Gene3D" id="1.25.40.20">
    <property type="entry name" value="Ankyrin repeat-containing domain"/>
    <property type="match status" value="2"/>
</dbReference>
<dbReference type="InterPro" id="IPR002110">
    <property type="entry name" value="Ankyrin_rpt"/>
</dbReference>
<dbReference type="InterPro" id="IPR036770">
    <property type="entry name" value="Ankyrin_rpt-contain_sf"/>
</dbReference>
<dbReference type="InterPro" id="IPR017401">
    <property type="entry name" value="MYPT1/MYPT2/Mbs85"/>
</dbReference>
<dbReference type="InterPro" id="IPR051226">
    <property type="entry name" value="PP1_Regulatory_Subunit"/>
</dbReference>
<dbReference type="InterPro" id="IPR031775">
    <property type="entry name" value="PRKG1_interact"/>
</dbReference>
<dbReference type="PANTHER" id="PTHR24179">
    <property type="entry name" value="PROTEIN PHOSPHATASE 1 REGULATORY SUBUNIT 12"/>
    <property type="match status" value="1"/>
</dbReference>
<dbReference type="PANTHER" id="PTHR24179:SF18">
    <property type="entry name" value="PROTEIN PHOSPHATASE 1 REGULATORY SUBUNIT 12B"/>
    <property type="match status" value="1"/>
</dbReference>
<dbReference type="Pfam" id="PF12796">
    <property type="entry name" value="Ank_2"/>
    <property type="match status" value="2"/>
</dbReference>
<dbReference type="Pfam" id="PF15898">
    <property type="entry name" value="PRKG1_interact"/>
    <property type="match status" value="1"/>
</dbReference>
<dbReference type="PIRSF" id="PIRSF038141">
    <property type="entry name" value="PP1_12ABC_vert"/>
    <property type="match status" value="1"/>
</dbReference>
<dbReference type="SMART" id="SM00248">
    <property type="entry name" value="ANK"/>
    <property type="match status" value="5"/>
</dbReference>
<dbReference type="SUPFAM" id="SSF48403">
    <property type="entry name" value="Ankyrin repeat"/>
    <property type="match status" value="1"/>
</dbReference>
<dbReference type="PROSITE" id="PS50297">
    <property type="entry name" value="ANK_REP_REGION"/>
    <property type="match status" value="1"/>
</dbReference>
<dbReference type="PROSITE" id="PS50088">
    <property type="entry name" value="ANK_REPEAT"/>
    <property type="match status" value="4"/>
</dbReference>
<keyword id="KW-0877">Alternative promoter usage</keyword>
<keyword id="KW-0025">Alternative splicing</keyword>
<keyword id="KW-0040">ANK repeat</keyword>
<keyword id="KW-0963">Cytoplasm</keyword>
<keyword id="KW-0206">Cytoskeleton</keyword>
<keyword id="KW-0597">Phosphoprotein</keyword>
<keyword id="KW-1267">Proteomics identification</keyword>
<keyword id="KW-1185">Reference proteome</keyword>
<keyword id="KW-0677">Repeat</keyword>
<evidence type="ECO:0000250" key="1">
    <source>
        <dbReference type="UniProtKB" id="Q8BG95"/>
    </source>
</evidence>
<evidence type="ECO:0000256" key="2">
    <source>
        <dbReference type="SAM" id="MobiDB-lite"/>
    </source>
</evidence>
<evidence type="ECO:0000269" key="3">
    <source>
    </source>
</evidence>
<evidence type="ECO:0000269" key="4">
    <source>
    </source>
</evidence>
<evidence type="ECO:0000269" key="5">
    <source>
    </source>
</evidence>
<evidence type="ECO:0000269" key="6">
    <source ref="2"/>
</evidence>
<evidence type="ECO:0000303" key="7">
    <source>
    </source>
</evidence>
<evidence type="ECO:0000303" key="8">
    <source>
    </source>
</evidence>
<evidence type="ECO:0000305" key="9"/>
<evidence type="ECO:0007744" key="10">
    <source>
    </source>
</evidence>
<organism>
    <name type="scientific">Homo sapiens</name>
    <name type="common">Human</name>
    <dbReference type="NCBI Taxonomy" id="9606"/>
    <lineage>
        <taxon>Eukaryota</taxon>
        <taxon>Metazoa</taxon>
        <taxon>Chordata</taxon>
        <taxon>Craniata</taxon>
        <taxon>Vertebrata</taxon>
        <taxon>Euteleostomi</taxon>
        <taxon>Mammalia</taxon>
        <taxon>Eutheria</taxon>
        <taxon>Euarchontoglires</taxon>
        <taxon>Primates</taxon>
        <taxon>Haplorrhini</taxon>
        <taxon>Catarrhini</taxon>
        <taxon>Hominidae</taxon>
        <taxon>Homo</taxon>
    </lineage>
</organism>
<sequence length="982" mass="110404">MAELEHLGGKRAESARMRRAEQLRRWRGSLTEQEPAERRGAGRQPLTRRGSPRVRFEDGAVFLAACSSGDTDEVRKLLARGADINTVNVDGLTALHQACIDENLDMVKFLVENRANVNQQDNEGWTPLHAAASCGYLNIAEYFINHGASVGIVNSEGEVPSDLAEEPAMKDLLLEQVKKQGVDLEQSRKEEEQQMLQDARQWLNSGKIEDVRQARSGATALHVAAAKGYSEVLRLLIQAGYELNVQDYDGWTPLHAAAHWGVKEACSILAEALCDMDIRNKLGQTPFDVADEGLVEHLELLQKKQNVLRSEKETRNKLIESDLNSKIQSGFFKNKEKMLYEEETPKSQEMEEENKESSSSSSEEEEGEDEASESETEKEADKKPEAFVNHSNSESKSSITEQIPAPAQNTFSASSARRFSSGLFNKPEEPKDESPSSWRLGLRKTGSHNMLSEVANSREPIRDRGSSIYRSSSSPRISALLDNKDKERENKSYISSLAPRKLNSTSDIEEKENRESAVNLVRSGSYTRQLWRDEAKGNEIPQTIAPSTYVSTYLKRTPHKSQADTTAEKTADNVSSSTPLCVITNRPLPSTANGVTATPVLSITGTDSSVEAREKRRSYLTPVRDEEAESLRKARSRQARQTRRSTQGVTLTDLQEAERTFSRSRAERQAQEQPREKPTDTEGLEGSPEKHEPSAVPATEAGEGQQPWGRSLDEEPICHRLRCPAQPDKPTTPASPSTSRPSLYTSSHLLWTNRFSVPDSESSETTTNTTTAKEMDKNENEEADLDEQSSKRLSIRERRRPKERRRGTGINFWTKDEDETDGSEEVKETWHERLSRLESGGSNPTTSDSYGDRASARARREAREARLATLTSRVEEDSNRDYKKLYESALTENQKLKTKLQEAQLELADIKSKLEKVAQQKQEKTSDRSSVLEMEKRERRALERKMSEMEEEMKVLTELKSDNQRLKDENGALIRVISKLSK</sequence>
<reference key="1">
    <citation type="journal article" date="1998" name="Genomics">
        <title>A new isoform of human myosin phosphatase targeting/regulatory subunit (MYPT2): cDNA cloning, tissue expression, and chromosomal mapping.</title>
        <authorList>
            <person name="Fujioka M."/>
            <person name="Takahashi N."/>
            <person name="Odai H."/>
            <person name="Araki S."/>
            <person name="Ichikawa K."/>
            <person name="Feng J."/>
            <person name="Nakamura M."/>
            <person name="Kaibuchi K."/>
            <person name="Hartshorne D.J."/>
            <person name="Nakano T."/>
            <person name="Ito M."/>
        </authorList>
    </citation>
    <scope>NUCLEOTIDE SEQUENCE [MRNA] (ISOFORM 1)</scope>
    <scope>VARIANT ILE-182</scope>
    <scope>FUNCTION</scope>
    <scope>TISSUE SPECIFICITY</scope>
    <source>
        <tissue>Brain</tissue>
    </source>
</reference>
<reference key="2">
    <citation type="submission" date="2000-11" db="EMBL/GenBank/DDBJ databases">
        <title>Human myosin phosphatase target subunit 2 (MYPT2): full-length cDNA cloning, genomic structure, and mutation analysis in patients with familial dilated cardiomyopathy mapped to 1q32.</title>
        <authorList>
            <person name="Li D."/>
            <person name="Roberts R."/>
        </authorList>
    </citation>
    <scope>NUCLEOTIDE SEQUENCE [GENOMIC DNA / MRNA]</scope>
    <scope>VARIANT ILE-182</scope>
</reference>
<reference key="3">
    <citation type="journal article" date="2001" name="J. Biol. Chem.">
        <title>Identification, characterization, and functional analysis of heart-specific myosin light chain phosphatase small subunit.</title>
        <authorList>
            <person name="Arimura T."/>
            <person name="Suematsu N."/>
            <person name="Zhou Y.-B."/>
            <person name="Nishimura J."/>
            <person name="Satoh S."/>
            <person name="Takeshita A."/>
            <person name="Kanaide H."/>
            <person name="Kimura A."/>
        </authorList>
    </citation>
    <scope>NUCLEOTIDE SEQUENCE [MRNA] (ISOFORMS 3 AND 4)</scope>
    <scope>FUNCTION</scope>
    <scope>TISSUE SPECIFICITY</scope>
    <scope>INTERACTION WITH PPP1R12A</scope>
    <source>
        <tissue>Heart</tissue>
    </source>
</reference>
<reference key="4">
    <citation type="journal article" date="2006" name="Nature">
        <title>The DNA sequence and biological annotation of human chromosome 1.</title>
        <authorList>
            <person name="Gregory S.G."/>
            <person name="Barlow K.F."/>
            <person name="McLay K.E."/>
            <person name="Kaul R."/>
            <person name="Swarbreck D."/>
            <person name="Dunham A."/>
            <person name="Scott C.E."/>
            <person name="Howe K.L."/>
            <person name="Woodfine K."/>
            <person name="Spencer C.C.A."/>
            <person name="Jones M.C."/>
            <person name="Gillson C."/>
            <person name="Searle S."/>
            <person name="Zhou Y."/>
            <person name="Kokocinski F."/>
            <person name="McDonald L."/>
            <person name="Evans R."/>
            <person name="Phillips K."/>
            <person name="Atkinson A."/>
            <person name="Cooper R."/>
            <person name="Jones C."/>
            <person name="Hall R.E."/>
            <person name="Andrews T.D."/>
            <person name="Lloyd C."/>
            <person name="Ainscough R."/>
            <person name="Almeida J.P."/>
            <person name="Ambrose K.D."/>
            <person name="Anderson F."/>
            <person name="Andrew R.W."/>
            <person name="Ashwell R.I.S."/>
            <person name="Aubin K."/>
            <person name="Babbage A.K."/>
            <person name="Bagguley C.L."/>
            <person name="Bailey J."/>
            <person name="Beasley H."/>
            <person name="Bethel G."/>
            <person name="Bird C.P."/>
            <person name="Bray-Allen S."/>
            <person name="Brown J.Y."/>
            <person name="Brown A.J."/>
            <person name="Buckley D."/>
            <person name="Burton J."/>
            <person name="Bye J."/>
            <person name="Carder C."/>
            <person name="Chapman J.C."/>
            <person name="Clark S.Y."/>
            <person name="Clarke G."/>
            <person name="Clee C."/>
            <person name="Cobley V."/>
            <person name="Collier R.E."/>
            <person name="Corby N."/>
            <person name="Coville G.J."/>
            <person name="Davies J."/>
            <person name="Deadman R."/>
            <person name="Dunn M."/>
            <person name="Earthrowl M."/>
            <person name="Ellington A.G."/>
            <person name="Errington H."/>
            <person name="Frankish A."/>
            <person name="Frankland J."/>
            <person name="French L."/>
            <person name="Garner P."/>
            <person name="Garnett J."/>
            <person name="Gay L."/>
            <person name="Ghori M.R.J."/>
            <person name="Gibson R."/>
            <person name="Gilby L.M."/>
            <person name="Gillett W."/>
            <person name="Glithero R.J."/>
            <person name="Grafham D.V."/>
            <person name="Griffiths C."/>
            <person name="Griffiths-Jones S."/>
            <person name="Grocock R."/>
            <person name="Hammond S."/>
            <person name="Harrison E.S.I."/>
            <person name="Hart E."/>
            <person name="Haugen E."/>
            <person name="Heath P.D."/>
            <person name="Holmes S."/>
            <person name="Holt K."/>
            <person name="Howden P.J."/>
            <person name="Hunt A.R."/>
            <person name="Hunt S.E."/>
            <person name="Hunter G."/>
            <person name="Isherwood J."/>
            <person name="James R."/>
            <person name="Johnson C."/>
            <person name="Johnson D."/>
            <person name="Joy A."/>
            <person name="Kay M."/>
            <person name="Kershaw J.K."/>
            <person name="Kibukawa M."/>
            <person name="Kimberley A.M."/>
            <person name="King A."/>
            <person name="Knights A.J."/>
            <person name="Lad H."/>
            <person name="Laird G."/>
            <person name="Lawlor S."/>
            <person name="Leongamornlert D.A."/>
            <person name="Lloyd D.M."/>
            <person name="Loveland J."/>
            <person name="Lovell J."/>
            <person name="Lush M.J."/>
            <person name="Lyne R."/>
            <person name="Martin S."/>
            <person name="Mashreghi-Mohammadi M."/>
            <person name="Matthews L."/>
            <person name="Matthews N.S.W."/>
            <person name="McLaren S."/>
            <person name="Milne S."/>
            <person name="Mistry S."/>
            <person name="Moore M.J.F."/>
            <person name="Nickerson T."/>
            <person name="O'Dell C.N."/>
            <person name="Oliver K."/>
            <person name="Palmeiri A."/>
            <person name="Palmer S.A."/>
            <person name="Parker A."/>
            <person name="Patel D."/>
            <person name="Pearce A.V."/>
            <person name="Peck A.I."/>
            <person name="Pelan S."/>
            <person name="Phelps K."/>
            <person name="Phillimore B.J."/>
            <person name="Plumb R."/>
            <person name="Rajan J."/>
            <person name="Raymond C."/>
            <person name="Rouse G."/>
            <person name="Saenphimmachak C."/>
            <person name="Sehra H.K."/>
            <person name="Sheridan E."/>
            <person name="Shownkeen R."/>
            <person name="Sims S."/>
            <person name="Skuce C.D."/>
            <person name="Smith M."/>
            <person name="Steward C."/>
            <person name="Subramanian S."/>
            <person name="Sycamore N."/>
            <person name="Tracey A."/>
            <person name="Tromans A."/>
            <person name="Van Helmond Z."/>
            <person name="Wall M."/>
            <person name="Wallis J.M."/>
            <person name="White S."/>
            <person name="Whitehead S.L."/>
            <person name="Wilkinson J.E."/>
            <person name="Willey D.L."/>
            <person name="Williams H."/>
            <person name="Wilming L."/>
            <person name="Wray P.W."/>
            <person name="Wu Z."/>
            <person name="Coulson A."/>
            <person name="Vaudin M."/>
            <person name="Sulston J.E."/>
            <person name="Durbin R.M."/>
            <person name="Hubbard T."/>
            <person name="Wooster R."/>
            <person name="Dunham I."/>
            <person name="Carter N.P."/>
            <person name="McVean G."/>
            <person name="Ross M.T."/>
            <person name="Harrow J."/>
            <person name="Olson M.V."/>
            <person name="Beck S."/>
            <person name="Rogers J."/>
            <person name="Bentley D.R."/>
        </authorList>
    </citation>
    <scope>NUCLEOTIDE SEQUENCE [LARGE SCALE GENOMIC DNA]</scope>
</reference>
<reference key="5">
    <citation type="submission" date="2005-07" db="EMBL/GenBank/DDBJ databases">
        <authorList>
            <person name="Mural R.J."/>
            <person name="Istrail S."/>
            <person name="Sutton G.G."/>
            <person name="Florea L."/>
            <person name="Halpern A.L."/>
            <person name="Mobarry C.M."/>
            <person name="Lippert R."/>
            <person name="Walenz B."/>
            <person name="Shatkay H."/>
            <person name="Dew I."/>
            <person name="Miller J.R."/>
            <person name="Flanigan M.J."/>
            <person name="Edwards N.J."/>
            <person name="Bolanos R."/>
            <person name="Fasulo D."/>
            <person name="Halldorsson B.V."/>
            <person name="Hannenhalli S."/>
            <person name="Turner R."/>
            <person name="Yooseph S."/>
            <person name="Lu F."/>
            <person name="Nusskern D.R."/>
            <person name="Shue B.C."/>
            <person name="Zheng X.H."/>
            <person name="Zhong F."/>
            <person name="Delcher A.L."/>
            <person name="Huson D.H."/>
            <person name="Kravitz S.A."/>
            <person name="Mouchard L."/>
            <person name="Reinert K."/>
            <person name="Remington K.A."/>
            <person name="Clark A.G."/>
            <person name="Waterman M.S."/>
            <person name="Eichler E.E."/>
            <person name="Adams M.D."/>
            <person name="Hunkapiller M.W."/>
            <person name="Myers E.W."/>
            <person name="Venter J.C."/>
        </authorList>
    </citation>
    <scope>NUCLEOTIDE SEQUENCE [LARGE SCALE GENOMIC DNA]</scope>
</reference>
<reference key="6">
    <citation type="journal article" date="2004" name="Genome Res.">
        <title>The status, quality, and expansion of the NIH full-length cDNA project: the Mammalian Gene Collection (MGC).</title>
        <authorList>
            <consortium name="The MGC Project Team"/>
        </authorList>
    </citation>
    <scope>NUCLEOTIDE SEQUENCE [LARGE SCALE MRNA] (ISOFORMS 1; 2 AND 5)</scope>
    <source>
        <tissue>Brain</tissue>
    </source>
</reference>
<reference key="7">
    <citation type="journal article" date="2003" name="J. Biol. Chem.">
        <title>PDZ domain-mediated interaction of interleukin-16 precursor proteins with myosin phosphatase targeting subunits.</title>
        <authorList>
            <person name="Bannert N."/>
            <person name="Vollhardt K."/>
            <person name="Asomuddinov B."/>
            <person name="Haag M."/>
            <person name="Koenig H."/>
            <person name="Norley S."/>
            <person name="Kurth R."/>
        </authorList>
    </citation>
    <scope>INTERACTION WITH IL16</scope>
    <scope>SUBCELLULAR LOCATION</scope>
</reference>
<reference key="8">
    <citation type="journal article" date="2010" name="Sci. Signal.">
        <title>Quantitative phosphoproteomics reveals widespread full phosphorylation site occupancy during mitosis.</title>
        <authorList>
            <person name="Olsen J.V."/>
            <person name="Vermeulen M."/>
            <person name="Santamaria A."/>
            <person name="Kumar C."/>
            <person name="Miller M.L."/>
            <person name="Jensen L.J."/>
            <person name="Gnad F."/>
            <person name="Cox J."/>
            <person name="Jensen T.S."/>
            <person name="Nigg E.A."/>
            <person name="Brunak S."/>
            <person name="Mann M."/>
        </authorList>
    </citation>
    <scope>IDENTIFICATION BY MASS SPECTROMETRY [LARGE SCALE ANALYSIS]</scope>
    <source>
        <tissue>Cervix carcinoma</tissue>
    </source>
</reference>
<reference key="9">
    <citation type="journal article" date="2013" name="J. Proteome Res.">
        <title>Toward a comprehensive characterization of a human cancer cell phosphoproteome.</title>
        <authorList>
            <person name="Zhou H."/>
            <person name="Di Palma S."/>
            <person name="Preisinger C."/>
            <person name="Peng M."/>
            <person name="Polat A.N."/>
            <person name="Heck A.J."/>
            <person name="Mohammed S."/>
        </authorList>
    </citation>
    <scope>PHOSPHORYLATION [LARGE SCALE ANALYSIS] AT THR-646</scope>
    <scope>IDENTIFICATION BY MASS SPECTROMETRY [LARGE SCALE ANALYSIS]</scope>
    <source>
        <tissue>Cervix carcinoma</tissue>
        <tissue>Erythroleukemia</tissue>
    </source>
</reference>
<comment type="function">
    <text evidence="3 5">Regulates myosin phosphatase activity. Augments Ca(2+) sensitivity of the contractile apparatus.</text>
</comment>
<comment type="subunit">
    <text>PP1 comprises a catalytic subunit, PPP1CA, PPP1CB or PPP1CC, and one or several targeting or regulatory subunits. PPP1R12B mediates binding to myosin. Isoform 3 and isoform 4 bind PPP1R12A, but not isoform 1 of PPP1R12B itself. Binds IL16.</text>
</comment>
<comment type="interaction">
    <interactant intactId="EBI-10700351">
        <id>O60237-2</id>
    </interactant>
    <interactant intactId="EBI-356015">
        <id>Q14204</id>
        <label>DYNC1H1</label>
    </interactant>
    <organismsDiffer>false</organismsDiffer>
    <experiments>3</experiments>
</comment>
<comment type="interaction">
    <interactant intactId="EBI-10700351">
        <id>O60237-2</id>
    </interactant>
    <interactant intactId="EBI-348399">
        <id>P22607</id>
        <label>FGFR3</label>
    </interactant>
    <organismsDiffer>false</organismsDiffer>
    <experiments>3</experiments>
</comment>
<comment type="interaction">
    <interactant intactId="EBI-10700351">
        <id>O60237-2</id>
    </interactant>
    <interactant intactId="EBI-8285963">
        <id>Q14957</id>
        <label>GRIN2C</label>
    </interactant>
    <organismsDiffer>false</organismsDiffer>
    <experiments>3</experiments>
</comment>
<comment type="interaction">
    <interactant intactId="EBI-10700351">
        <id>O60237-2</id>
    </interactant>
    <interactant intactId="EBI-351506">
        <id>P06396</id>
        <label>GSN</label>
    </interactant>
    <organismsDiffer>false</organismsDiffer>
    <experiments>3</experiments>
</comment>
<comment type="interaction">
    <interactant intactId="EBI-10700351">
        <id>O60237-2</id>
    </interactant>
    <interactant intactId="EBI-79893">
        <id>Q92569</id>
        <label>PIK3R3</label>
    </interactant>
    <organismsDiffer>false</organismsDiffer>
    <experiments>2</experiments>
</comment>
<comment type="subcellular location">
    <subcellularLocation>
        <location evidence="4">Cytoplasm</location>
        <location evidence="4">Cytoskeleton</location>
    </subcellularLocation>
    <subcellularLocation>
        <location evidence="4">Cytoplasm</location>
        <location evidence="4">Cytoskeleton</location>
        <location evidence="4">Stress fiber</location>
    </subcellularLocation>
    <text evidence="4">Along actomyosin filaments.</text>
</comment>
<comment type="alternative products">
    <event type="alternative promoter"/>
    <event type="alternative splicing"/>
    <isoform>
        <id>O60237-1</id>
        <name>1</name>
        <sequence type="displayed"/>
    </isoform>
    <isoform>
        <id>O60237-2</id>
        <name>2</name>
        <sequence type="described" ref="VSP_009257 VSP_009258"/>
    </isoform>
    <isoform>
        <id>O60237-3</id>
        <name>3</name>
        <name>hHS-M21B</name>
        <name>Heart-specific myosin light chain phosphatase small subunit B</name>
        <sequence type="described" ref="VSP_009256 VSP_009259"/>
    </isoform>
    <isoform>
        <id>O60237-4</id>
        <name>4</name>
        <name>hHS-M21A</name>
        <name>Heart-specific myosin light chain phosphatase small subunit A</name>
        <sequence type="described" ref="VSP_009256"/>
    </isoform>
    <isoform>
        <id>O60237-5</id>
        <name>5</name>
        <sequence type="described" ref="VSP_043159 VSP_043160"/>
    </isoform>
    <isoform>
        <id>O60237-6</id>
        <name>6</name>
        <sequence type="described" ref="VSP_059344"/>
    </isoform>
</comment>
<comment type="tissue specificity">
    <text evidence="3 5">Detected in skeletal muscle, fetal and adult heart, brain, placenta, kidney, spleen, thymus, pancreas and lung. Isoform 3 and isoform 4 are heart specific.</text>
</comment>
<comment type="miscellaneous">
    <molecule>Isoform 1</molecule>
    <text>Produced by alternative promoter usage.</text>
</comment>
<comment type="miscellaneous">
    <molecule>Isoform 2</molecule>
    <text evidence="9">Produced by alternative splicing of isoform 1.</text>
</comment>
<comment type="miscellaneous">
    <molecule>Isoform 3</molecule>
    <text evidence="9">Produced by alternative splicing of isoform 4.</text>
</comment>
<comment type="miscellaneous">
    <molecule>Isoform 4</molecule>
    <text evidence="9">Produced by alternative promoter usage.</text>
</comment>
<feature type="chain" id="PRO_0000067028" description="Protein phosphatase 1 regulatory subunit 12B">
    <location>
        <begin position="1"/>
        <end position="982"/>
    </location>
</feature>
<feature type="repeat" description="ANK 1">
    <location>
        <begin position="57"/>
        <end position="86"/>
    </location>
</feature>
<feature type="repeat" description="ANK 2">
    <location>
        <begin position="90"/>
        <end position="119"/>
    </location>
</feature>
<feature type="repeat" description="ANK 3">
    <location>
        <begin position="123"/>
        <end position="152"/>
    </location>
</feature>
<feature type="repeat" description="ANK 4">
    <location>
        <begin position="216"/>
        <end position="245"/>
    </location>
</feature>
<feature type="repeat" description="ANK 5">
    <location>
        <begin position="249"/>
        <end position="278"/>
    </location>
</feature>
<feature type="region of interest" description="Disordered" evidence="2">
    <location>
        <begin position="1"/>
        <end position="50"/>
    </location>
</feature>
<feature type="region of interest" description="Disordered" evidence="2">
    <location>
        <begin position="342"/>
        <end position="517"/>
    </location>
</feature>
<feature type="region of interest" description="Disordered" evidence="2">
    <location>
        <begin position="556"/>
        <end position="579"/>
    </location>
</feature>
<feature type="region of interest" description="Disordered" evidence="2">
    <location>
        <begin position="606"/>
        <end position="864"/>
    </location>
</feature>
<feature type="region of interest" description="Disordered" evidence="2">
    <location>
        <begin position="918"/>
        <end position="948"/>
    </location>
</feature>
<feature type="compositionally biased region" description="Basic and acidic residues" evidence="2">
    <location>
        <begin position="1"/>
        <end position="24"/>
    </location>
</feature>
<feature type="compositionally biased region" description="Acidic residues" evidence="2">
    <location>
        <begin position="362"/>
        <end position="374"/>
    </location>
</feature>
<feature type="compositionally biased region" description="Basic and acidic residues" evidence="2">
    <location>
        <begin position="375"/>
        <end position="385"/>
    </location>
</feature>
<feature type="compositionally biased region" description="Polar residues" evidence="2">
    <location>
        <begin position="389"/>
        <end position="401"/>
    </location>
</feature>
<feature type="compositionally biased region" description="Low complexity" evidence="2">
    <location>
        <begin position="411"/>
        <end position="421"/>
    </location>
</feature>
<feature type="compositionally biased region" description="Low complexity" evidence="2">
    <location>
        <begin position="466"/>
        <end position="478"/>
    </location>
</feature>
<feature type="compositionally biased region" description="Basic and acidic residues" evidence="2">
    <location>
        <begin position="482"/>
        <end position="491"/>
    </location>
</feature>
<feature type="compositionally biased region" description="Basic and acidic residues" evidence="2">
    <location>
        <begin position="623"/>
        <end position="632"/>
    </location>
</feature>
<feature type="compositionally biased region" description="Basic residues" evidence="2">
    <location>
        <begin position="633"/>
        <end position="643"/>
    </location>
</feature>
<feature type="compositionally biased region" description="Basic and acidic residues" evidence="2">
    <location>
        <begin position="656"/>
        <end position="680"/>
    </location>
</feature>
<feature type="compositionally biased region" description="Low complexity" evidence="2">
    <location>
        <begin position="731"/>
        <end position="742"/>
    </location>
</feature>
<feature type="compositionally biased region" description="Polar residues" evidence="2">
    <location>
        <begin position="743"/>
        <end position="755"/>
    </location>
</feature>
<feature type="compositionally biased region" description="Basic residues" evidence="2">
    <location>
        <begin position="797"/>
        <end position="807"/>
    </location>
</feature>
<feature type="compositionally biased region" description="Basic and acidic residues" evidence="2">
    <location>
        <begin position="824"/>
        <end position="836"/>
    </location>
</feature>
<feature type="compositionally biased region" description="Polar residues" evidence="2">
    <location>
        <begin position="840"/>
        <end position="849"/>
    </location>
</feature>
<feature type="compositionally biased region" description="Basic and acidic residues" evidence="2">
    <location>
        <begin position="850"/>
        <end position="864"/>
    </location>
</feature>
<feature type="compositionally biased region" description="Basic and acidic residues" evidence="2">
    <location>
        <begin position="918"/>
        <end position="927"/>
    </location>
</feature>
<feature type="compositionally biased region" description="Basic and acidic residues" evidence="2">
    <location>
        <begin position="933"/>
        <end position="948"/>
    </location>
</feature>
<feature type="modified residue" description="Phosphoserine" evidence="1">
    <location>
        <position position="29"/>
    </location>
</feature>
<feature type="modified residue" description="Phosphothreonine" evidence="1">
    <location>
        <position position="445"/>
    </location>
</feature>
<feature type="modified residue" description="Phosphothreonine" evidence="10">
    <location>
        <position position="646"/>
    </location>
</feature>
<feature type="modified residue" description="Phosphothreonine" evidence="1">
    <location>
        <position position="808"/>
    </location>
</feature>
<feature type="modified residue" description="Phosphoserine" evidence="1">
    <location>
        <position position="839"/>
    </location>
</feature>
<feature type="modified residue" description="Phosphoserine" evidence="1">
    <location>
        <position position="947"/>
    </location>
</feature>
<feature type="splice variant" id="VSP_009256" description="In isoform 3 and isoform 4." evidence="7">
    <location>
        <begin position="1"/>
        <end position="774"/>
    </location>
</feature>
<feature type="splice variant" id="VSP_009257" description="In isoform 2." evidence="8">
    <original>DKKPEA</original>
    <variation>VLFWPF</variation>
    <location>
        <begin position="381"/>
        <end position="386"/>
    </location>
</feature>
<feature type="splice variant" id="VSP_009258" description="In isoform 2." evidence="8">
    <location>
        <begin position="387"/>
        <end position="982"/>
    </location>
</feature>
<feature type="splice variant" id="VSP_043159" description="In isoform 5." evidence="8">
    <original>ERENKSYISSLAPRKLNSTSDIEEKENRE</original>
    <variation>VQFGRVWGNSKAVFFFHENSILGTNENIF</variation>
    <location>
        <begin position="487"/>
        <end position="515"/>
    </location>
</feature>
<feature type="splice variant" id="VSP_043160" description="In isoform 5." evidence="8">
    <location>
        <begin position="516"/>
        <end position="982"/>
    </location>
</feature>
<feature type="splice variant" id="VSP_059344" description="In isoform 6.">
    <original>K</original>
    <variation>KSASFGRSSDPTSPYISANRNSSPATSPITIGSSTSRGSQWQPASSCPAPISANTTASVHHG</variation>
    <location>
        <position position="555"/>
    </location>
</feature>
<feature type="splice variant" id="VSP_009259" description="In isoform 3." evidence="7">
    <original>VLTELKSDNQRLKDENGALIRVISKLSK</original>
    <variation>NLHQLKQIQTLKQMNEQLQAENRALTRVVARLSESIESSDTQEL</variation>
    <location>
        <begin position="955"/>
        <end position="982"/>
    </location>
</feature>
<feature type="sequence variant" id="VAR_017480" description="In dbSNP:rs2843414." evidence="5 6">
    <original>V</original>
    <variation>I</variation>
    <location>
        <position position="182"/>
    </location>
</feature>
<feature type="sequence variant" id="VAR_024177" description="In dbSNP:rs3881953.">
    <original>R</original>
    <variation>K</variation>
    <location>
        <position position="836"/>
    </location>
</feature>